<gene>
    <name evidence="1" type="primary">aat</name>
    <name type="ordered locus">YPTS_1496</name>
</gene>
<name>LFTR_YERPB</name>
<dbReference type="EC" id="2.3.2.6" evidence="1"/>
<dbReference type="EMBL" id="CP001048">
    <property type="protein sequence ID" value="ACC88468.1"/>
    <property type="molecule type" value="Genomic_DNA"/>
</dbReference>
<dbReference type="RefSeq" id="WP_002211346.1">
    <property type="nucleotide sequence ID" value="NZ_CP009780.1"/>
</dbReference>
<dbReference type="SMR" id="B2KA03"/>
<dbReference type="GeneID" id="57977167"/>
<dbReference type="KEGG" id="ypb:YPTS_1496"/>
<dbReference type="PATRIC" id="fig|502801.10.peg.859"/>
<dbReference type="GO" id="GO:0005737">
    <property type="term" value="C:cytoplasm"/>
    <property type="evidence" value="ECO:0007669"/>
    <property type="project" value="UniProtKB-SubCell"/>
</dbReference>
<dbReference type="GO" id="GO:0008914">
    <property type="term" value="F:leucyl-tRNA--protein transferase activity"/>
    <property type="evidence" value="ECO:0007669"/>
    <property type="project" value="UniProtKB-UniRule"/>
</dbReference>
<dbReference type="GO" id="GO:0030163">
    <property type="term" value="P:protein catabolic process"/>
    <property type="evidence" value="ECO:0007669"/>
    <property type="project" value="UniProtKB-UniRule"/>
</dbReference>
<dbReference type="FunFam" id="3.30.70.3550:FF:000001">
    <property type="entry name" value="Leucyl/phenylalanyl-tRNA--protein transferase"/>
    <property type="match status" value="1"/>
</dbReference>
<dbReference type="FunFam" id="3.40.630.70:FF:000001">
    <property type="entry name" value="Leucyl/phenylalanyl-tRNA--protein transferase"/>
    <property type="match status" value="1"/>
</dbReference>
<dbReference type="Gene3D" id="3.40.630.70">
    <property type="entry name" value="Leucyl/phenylalanyl-tRNA-protein transferase, C-terminal domain"/>
    <property type="match status" value="1"/>
</dbReference>
<dbReference type="Gene3D" id="3.30.70.3550">
    <property type="entry name" value="Leucyl/phenylalanyl-tRNA-protein transferase, N-terminal domain"/>
    <property type="match status" value="1"/>
</dbReference>
<dbReference type="HAMAP" id="MF_00688">
    <property type="entry name" value="Leu_Phe_trans"/>
    <property type="match status" value="1"/>
</dbReference>
<dbReference type="InterPro" id="IPR016181">
    <property type="entry name" value="Acyl_CoA_acyltransferase"/>
</dbReference>
<dbReference type="InterPro" id="IPR004616">
    <property type="entry name" value="Leu/Phe-tRNA_Trfase"/>
</dbReference>
<dbReference type="InterPro" id="IPR042203">
    <property type="entry name" value="Leu/Phe-tRNA_Trfase_C"/>
</dbReference>
<dbReference type="InterPro" id="IPR042221">
    <property type="entry name" value="Leu/Phe-tRNA_Trfase_N"/>
</dbReference>
<dbReference type="NCBIfam" id="TIGR00667">
    <property type="entry name" value="aat"/>
    <property type="match status" value="1"/>
</dbReference>
<dbReference type="PANTHER" id="PTHR30098">
    <property type="entry name" value="LEUCYL/PHENYLALANYL-TRNA--PROTEIN TRANSFERASE"/>
    <property type="match status" value="1"/>
</dbReference>
<dbReference type="PANTHER" id="PTHR30098:SF2">
    <property type="entry name" value="LEUCYL_PHENYLALANYL-TRNA--PROTEIN TRANSFERASE"/>
    <property type="match status" value="1"/>
</dbReference>
<dbReference type="Pfam" id="PF03588">
    <property type="entry name" value="Leu_Phe_trans"/>
    <property type="match status" value="1"/>
</dbReference>
<dbReference type="SUPFAM" id="SSF55729">
    <property type="entry name" value="Acyl-CoA N-acyltransferases (Nat)"/>
    <property type="match status" value="1"/>
</dbReference>
<feature type="chain" id="PRO_1000131960" description="Leucyl/phenylalanyl-tRNA--protein transferase">
    <location>
        <begin position="1"/>
        <end position="236"/>
    </location>
</feature>
<reference key="1">
    <citation type="submission" date="2008-04" db="EMBL/GenBank/DDBJ databases">
        <title>Complete sequence of Yersinia pseudotuberculosis PB1/+.</title>
        <authorList>
            <person name="Copeland A."/>
            <person name="Lucas S."/>
            <person name="Lapidus A."/>
            <person name="Glavina del Rio T."/>
            <person name="Dalin E."/>
            <person name="Tice H."/>
            <person name="Bruce D."/>
            <person name="Goodwin L."/>
            <person name="Pitluck S."/>
            <person name="Munk A.C."/>
            <person name="Brettin T."/>
            <person name="Detter J.C."/>
            <person name="Han C."/>
            <person name="Tapia R."/>
            <person name="Schmutz J."/>
            <person name="Larimer F."/>
            <person name="Land M."/>
            <person name="Hauser L."/>
            <person name="Challacombe J.F."/>
            <person name="Green L."/>
            <person name="Lindler L.E."/>
            <person name="Nikolich M.P."/>
            <person name="Richardson P."/>
        </authorList>
    </citation>
    <scope>NUCLEOTIDE SEQUENCE [LARGE SCALE GENOMIC DNA]</scope>
    <source>
        <strain>PB1/+</strain>
    </source>
</reference>
<keyword id="KW-0012">Acyltransferase</keyword>
<keyword id="KW-0963">Cytoplasm</keyword>
<keyword id="KW-0808">Transferase</keyword>
<protein>
    <recommendedName>
        <fullName evidence="1">Leucyl/phenylalanyl-tRNA--protein transferase</fullName>
        <ecNumber evidence="1">2.3.2.6</ecNumber>
    </recommendedName>
    <alternativeName>
        <fullName evidence="1">L/F-transferase</fullName>
    </alternativeName>
    <alternativeName>
        <fullName evidence="1">Leucyltransferase</fullName>
    </alternativeName>
    <alternativeName>
        <fullName evidence="1">Phenyalanyltransferase</fullName>
    </alternativeName>
</protein>
<sequence>MRVTQLSSQSFIFPSPELALREPNGLLALGGDLTAPRLLAAYQRGIFPWFNPGEMILWWSPDPRAVLFPEDLHISRSMRRFIRHCPYRFTLNHAFADVISACATERDEGTWIGRDVQQAYCQLHALGHAHSLEVWLENELVGGLYGVAVGAVFCGESMFSRADNASKSALMVFCHHFTQHGGELIDCQVLNAHTASLGAVEIPRNFFLQQLSQLQFSPLPAECWLPQSLNFSSAMQ</sequence>
<comment type="function">
    <text evidence="1">Functions in the N-end rule pathway of protein degradation where it conjugates Leu, Phe and, less efficiently, Met from aminoacyl-tRNAs to the N-termini of proteins containing an N-terminal arginine or lysine.</text>
</comment>
<comment type="catalytic activity">
    <reaction evidence="1">
        <text>N-terminal L-lysyl-[protein] + L-leucyl-tRNA(Leu) = N-terminal L-leucyl-L-lysyl-[protein] + tRNA(Leu) + H(+)</text>
        <dbReference type="Rhea" id="RHEA:12340"/>
        <dbReference type="Rhea" id="RHEA-COMP:9613"/>
        <dbReference type="Rhea" id="RHEA-COMP:9622"/>
        <dbReference type="Rhea" id="RHEA-COMP:12670"/>
        <dbReference type="Rhea" id="RHEA-COMP:12671"/>
        <dbReference type="ChEBI" id="CHEBI:15378"/>
        <dbReference type="ChEBI" id="CHEBI:65249"/>
        <dbReference type="ChEBI" id="CHEBI:78442"/>
        <dbReference type="ChEBI" id="CHEBI:78494"/>
        <dbReference type="ChEBI" id="CHEBI:133043"/>
        <dbReference type="EC" id="2.3.2.6"/>
    </reaction>
</comment>
<comment type="catalytic activity">
    <reaction evidence="1">
        <text>N-terminal L-arginyl-[protein] + L-leucyl-tRNA(Leu) = N-terminal L-leucyl-L-arginyl-[protein] + tRNA(Leu) + H(+)</text>
        <dbReference type="Rhea" id="RHEA:50416"/>
        <dbReference type="Rhea" id="RHEA-COMP:9613"/>
        <dbReference type="Rhea" id="RHEA-COMP:9622"/>
        <dbReference type="Rhea" id="RHEA-COMP:12672"/>
        <dbReference type="Rhea" id="RHEA-COMP:12673"/>
        <dbReference type="ChEBI" id="CHEBI:15378"/>
        <dbReference type="ChEBI" id="CHEBI:64719"/>
        <dbReference type="ChEBI" id="CHEBI:78442"/>
        <dbReference type="ChEBI" id="CHEBI:78494"/>
        <dbReference type="ChEBI" id="CHEBI:133044"/>
        <dbReference type="EC" id="2.3.2.6"/>
    </reaction>
</comment>
<comment type="catalytic activity">
    <reaction evidence="1">
        <text>L-phenylalanyl-tRNA(Phe) + an N-terminal L-alpha-aminoacyl-[protein] = an N-terminal L-phenylalanyl-L-alpha-aminoacyl-[protein] + tRNA(Phe)</text>
        <dbReference type="Rhea" id="RHEA:43632"/>
        <dbReference type="Rhea" id="RHEA-COMP:9668"/>
        <dbReference type="Rhea" id="RHEA-COMP:9699"/>
        <dbReference type="Rhea" id="RHEA-COMP:10636"/>
        <dbReference type="Rhea" id="RHEA-COMP:10637"/>
        <dbReference type="ChEBI" id="CHEBI:78442"/>
        <dbReference type="ChEBI" id="CHEBI:78531"/>
        <dbReference type="ChEBI" id="CHEBI:78597"/>
        <dbReference type="ChEBI" id="CHEBI:83561"/>
        <dbReference type="EC" id="2.3.2.6"/>
    </reaction>
</comment>
<comment type="subcellular location">
    <subcellularLocation>
        <location evidence="1">Cytoplasm</location>
    </subcellularLocation>
</comment>
<comment type="similarity">
    <text evidence="1">Belongs to the L/F-transferase family.</text>
</comment>
<organism>
    <name type="scientific">Yersinia pseudotuberculosis serotype IB (strain PB1/+)</name>
    <dbReference type="NCBI Taxonomy" id="502801"/>
    <lineage>
        <taxon>Bacteria</taxon>
        <taxon>Pseudomonadati</taxon>
        <taxon>Pseudomonadota</taxon>
        <taxon>Gammaproteobacteria</taxon>
        <taxon>Enterobacterales</taxon>
        <taxon>Yersiniaceae</taxon>
        <taxon>Yersinia</taxon>
    </lineage>
</organism>
<accession>B2KA03</accession>
<evidence type="ECO:0000255" key="1">
    <source>
        <dbReference type="HAMAP-Rule" id="MF_00688"/>
    </source>
</evidence>
<proteinExistence type="inferred from homology"/>